<evidence type="ECO:0000255" key="1">
    <source>
        <dbReference type="HAMAP-Rule" id="MF_00104"/>
    </source>
</evidence>
<evidence type="ECO:0000256" key="2">
    <source>
        <dbReference type="SAM" id="MobiDB-lite"/>
    </source>
</evidence>
<keyword id="KW-0963">Cytoplasm</keyword>
<keyword id="KW-0255">Endonuclease</keyword>
<keyword id="KW-0378">Hydrolase</keyword>
<keyword id="KW-0460">Magnesium</keyword>
<keyword id="KW-0479">Metal-binding</keyword>
<keyword id="KW-0507">mRNA processing</keyword>
<keyword id="KW-0540">Nuclease</keyword>
<keyword id="KW-1185">Reference proteome</keyword>
<keyword id="KW-0694">RNA-binding</keyword>
<keyword id="KW-0698">rRNA processing</keyword>
<keyword id="KW-0699">rRNA-binding</keyword>
<keyword id="KW-0819">tRNA processing</keyword>
<comment type="function">
    <text evidence="1">Digests double-stranded RNA. Involved in the processing of primary rRNA transcript to yield the immediate precursors to the large and small rRNAs (23S and 16S). Processes some mRNAs, and tRNAs when they are encoded in the rRNA operon. Processes pre-crRNA and tracrRNA of type II CRISPR loci if present in the organism.</text>
</comment>
<comment type="catalytic activity">
    <reaction evidence="1">
        <text>Endonucleolytic cleavage to 5'-phosphomonoester.</text>
        <dbReference type="EC" id="3.1.26.3"/>
    </reaction>
</comment>
<comment type="cofactor">
    <cofactor evidence="1">
        <name>Mg(2+)</name>
        <dbReference type="ChEBI" id="CHEBI:18420"/>
    </cofactor>
</comment>
<comment type="subunit">
    <text evidence="1">Homodimer.</text>
</comment>
<comment type="subcellular location">
    <subcellularLocation>
        <location evidence="1">Cytoplasm</location>
    </subcellularLocation>
</comment>
<comment type="similarity">
    <text evidence="1">Belongs to the ribonuclease III family.</text>
</comment>
<name>RNC_LACPL</name>
<organism>
    <name type="scientific">Lactiplantibacillus plantarum (strain ATCC BAA-793 / NCIMB 8826 / WCFS1)</name>
    <name type="common">Lactobacillus plantarum</name>
    <dbReference type="NCBI Taxonomy" id="220668"/>
    <lineage>
        <taxon>Bacteria</taxon>
        <taxon>Bacillati</taxon>
        <taxon>Bacillota</taxon>
        <taxon>Bacilli</taxon>
        <taxon>Lactobacillales</taxon>
        <taxon>Lactobacillaceae</taxon>
        <taxon>Lactiplantibacillus</taxon>
    </lineage>
</organism>
<proteinExistence type="inferred from homology"/>
<accession>Q88WK0</accession>
<accession>F9UP03</accession>
<sequence>MITELAAMLKERFGIVFNDPDLLAEAFTQASYVNEHQDQQLKYYERVEFLGDAVLELVVSEYLYKRYKDMPQGKLTRLRAAMVCEESFASFARECDFPQYIRLGKGEQKAHAWERDSLLCDIFESFVGALYLDQGREPVLKFVHQVIFPKLDEGRFDGVFDYKTTLQEYLQRDGDVAIDYQLIEQDGPANERSYEIAVLADGQKIGEGWGHSKKEAEQSAARQAYSQLQQK</sequence>
<feature type="chain" id="PRO_0000180404" description="Ribonuclease 3">
    <location>
        <begin position="1"/>
        <end position="231"/>
    </location>
</feature>
<feature type="domain" description="RNase III" evidence="1">
    <location>
        <begin position="6"/>
        <end position="135"/>
    </location>
</feature>
<feature type="domain" description="DRBM" evidence="1">
    <location>
        <begin position="161"/>
        <end position="230"/>
    </location>
</feature>
<feature type="region of interest" description="Disordered" evidence="2">
    <location>
        <begin position="209"/>
        <end position="231"/>
    </location>
</feature>
<feature type="compositionally biased region" description="Polar residues" evidence="2">
    <location>
        <begin position="220"/>
        <end position="231"/>
    </location>
</feature>
<feature type="active site" evidence="1">
    <location>
        <position position="52"/>
    </location>
</feature>
<feature type="active site" evidence="1">
    <location>
        <position position="124"/>
    </location>
</feature>
<feature type="binding site" evidence="1">
    <location>
        <position position="48"/>
    </location>
    <ligand>
        <name>Mg(2+)</name>
        <dbReference type="ChEBI" id="CHEBI:18420"/>
    </ligand>
</feature>
<feature type="binding site" evidence="1">
    <location>
        <position position="121"/>
    </location>
    <ligand>
        <name>Mg(2+)</name>
        <dbReference type="ChEBI" id="CHEBI:18420"/>
    </ligand>
</feature>
<feature type="binding site" evidence="1">
    <location>
        <position position="124"/>
    </location>
    <ligand>
        <name>Mg(2+)</name>
        <dbReference type="ChEBI" id="CHEBI:18420"/>
    </ligand>
</feature>
<reference key="1">
    <citation type="journal article" date="2003" name="Proc. Natl. Acad. Sci. U.S.A.">
        <title>Complete genome sequence of Lactobacillus plantarum WCFS1.</title>
        <authorList>
            <person name="Kleerebezem M."/>
            <person name="Boekhorst J."/>
            <person name="van Kranenburg R."/>
            <person name="Molenaar D."/>
            <person name="Kuipers O.P."/>
            <person name="Leer R."/>
            <person name="Tarchini R."/>
            <person name="Peters S.A."/>
            <person name="Sandbrink H.M."/>
            <person name="Fiers M.W.E.J."/>
            <person name="Stiekema W."/>
            <person name="Klein Lankhorst R.M."/>
            <person name="Bron P.A."/>
            <person name="Hoffer S.M."/>
            <person name="Nierop Groot M.N."/>
            <person name="Kerkhoven R."/>
            <person name="De Vries M."/>
            <person name="Ursing B."/>
            <person name="De Vos W.M."/>
            <person name="Siezen R.J."/>
        </authorList>
    </citation>
    <scope>NUCLEOTIDE SEQUENCE [LARGE SCALE GENOMIC DNA]</scope>
    <source>
        <strain>ATCC BAA-793 / NCIMB 8826 / WCFS1</strain>
    </source>
</reference>
<reference key="2">
    <citation type="journal article" date="2012" name="J. Bacteriol.">
        <title>Complete resequencing and reannotation of the Lactobacillus plantarum WCFS1 genome.</title>
        <authorList>
            <person name="Siezen R.J."/>
            <person name="Francke C."/>
            <person name="Renckens B."/>
            <person name="Boekhorst J."/>
            <person name="Wels M."/>
            <person name="Kleerebezem M."/>
            <person name="van Hijum S.A."/>
        </authorList>
    </citation>
    <scope>NUCLEOTIDE SEQUENCE [LARGE SCALE GENOMIC DNA]</scope>
    <scope>GENOME REANNOTATION</scope>
    <source>
        <strain>ATCC BAA-793 / NCIMB 8826 / WCFS1</strain>
    </source>
</reference>
<gene>
    <name evidence="1" type="primary">rnc</name>
    <name type="ordered locus">lp_1631</name>
</gene>
<dbReference type="EC" id="3.1.26.3" evidence="1"/>
<dbReference type="EMBL" id="AL935263">
    <property type="protein sequence ID" value="CCC78942.1"/>
    <property type="molecule type" value="Genomic_DNA"/>
</dbReference>
<dbReference type="RefSeq" id="WP_003640377.1">
    <property type="nucleotide sequence ID" value="NC_004567.2"/>
</dbReference>
<dbReference type="RefSeq" id="YP_004889456.1">
    <property type="nucleotide sequence ID" value="NC_004567.2"/>
</dbReference>
<dbReference type="SMR" id="Q88WK0"/>
<dbReference type="STRING" id="220668.lp_1631"/>
<dbReference type="EnsemblBacteria" id="CCC78942">
    <property type="protein sequence ID" value="CCC78942"/>
    <property type="gene ID" value="lp_1631"/>
</dbReference>
<dbReference type="GeneID" id="89669011"/>
<dbReference type="KEGG" id="lpl:lp_1631"/>
<dbReference type="PATRIC" id="fig|220668.9.peg.1378"/>
<dbReference type="eggNOG" id="COG0571">
    <property type="taxonomic scope" value="Bacteria"/>
</dbReference>
<dbReference type="HOGENOM" id="CLU_000907_1_3_9"/>
<dbReference type="OrthoDB" id="9805026at2"/>
<dbReference type="PhylomeDB" id="Q88WK0"/>
<dbReference type="Proteomes" id="UP000000432">
    <property type="component" value="Chromosome"/>
</dbReference>
<dbReference type="GO" id="GO:0005737">
    <property type="term" value="C:cytoplasm"/>
    <property type="evidence" value="ECO:0007669"/>
    <property type="project" value="UniProtKB-SubCell"/>
</dbReference>
<dbReference type="GO" id="GO:0003725">
    <property type="term" value="F:double-stranded RNA binding"/>
    <property type="evidence" value="ECO:0007669"/>
    <property type="project" value="TreeGrafter"/>
</dbReference>
<dbReference type="GO" id="GO:0046872">
    <property type="term" value="F:metal ion binding"/>
    <property type="evidence" value="ECO:0007669"/>
    <property type="project" value="UniProtKB-KW"/>
</dbReference>
<dbReference type="GO" id="GO:0004525">
    <property type="term" value="F:ribonuclease III activity"/>
    <property type="evidence" value="ECO:0007669"/>
    <property type="project" value="UniProtKB-UniRule"/>
</dbReference>
<dbReference type="GO" id="GO:0019843">
    <property type="term" value="F:rRNA binding"/>
    <property type="evidence" value="ECO:0007669"/>
    <property type="project" value="UniProtKB-KW"/>
</dbReference>
<dbReference type="GO" id="GO:0006397">
    <property type="term" value="P:mRNA processing"/>
    <property type="evidence" value="ECO:0007669"/>
    <property type="project" value="UniProtKB-UniRule"/>
</dbReference>
<dbReference type="GO" id="GO:0010468">
    <property type="term" value="P:regulation of gene expression"/>
    <property type="evidence" value="ECO:0007669"/>
    <property type="project" value="TreeGrafter"/>
</dbReference>
<dbReference type="GO" id="GO:0006364">
    <property type="term" value="P:rRNA processing"/>
    <property type="evidence" value="ECO:0007669"/>
    <property type="project" value="UniProtKB-UniRule"/>
</dbReference>
<dbReference type="GO" id="GO:0008033">
    <property type="term" value="P:tRNA processing"/>
    <property type="evidence" value="ECO:0007669"/>
    <property type="project" value="UniProtKB-KW"/>
</dbReference>
<dbReference type="CDD" id="cd10845">
    <property type="entry name" value="DSRM_RNAse_III_family"/>
    <property type="match status" value="1"/>
</dbReference>
<dbReference type="CDD" id="cd00593">
    <property type="entry name" value="RIBOc"/>
    <property type="match status" value="1"/>
</dbReference>
<dbReference type="FunFam" id="1.10.1520.10:FF:000001">
    <property type="entry name" value="Ribonuclease 3"/>
    <property type="match status" value="1"/>
</dbReference>
<dbReference type="FunFam" id="3.30.160.20:FF:000003">
    <property type="entry name" value="Ribonuclease 3"/>
    <property type="match status" value="1"/>
</dbReference>
<dbReference type="Gene3D" id="3.30.160.20">
    <property type="match status" value="1"/>
</dbReference>
<dbReference type="Gene3D" id="1.10.1520.10">
    <property type="entry name" value="Ribonuclease III domain"/>
    <property type="match status" value="1"/>
</dbReference>
<dbReference type="HAMAP" id="MF_00104">
    <property type="entry name" value="RNase_III"/>
    <property type="match status" value="1"/>
</dbReference>
<dbReference type="InterPro" id="IPR014720">
    <property type="entry name" value="dsRBD_dom"/>
</dbReference>
<dbReference type="InterPro" id="IPR011907">
    <property type="entry name" value="RNase_III"/>
</dbReference>
<dbReference type="InterPro" id="IPR000999">
    <property type="entry name" value="RNase_III_dom"/>
</dbReference>
<dbReference type="InterPro" id="IPR036389">
    <property type="entry name" value="RNase_III_sf"/>
</dbReference>
<dbReference type="NCBIfam" id="TIGR02191">
    <property type="entry name" value="RNaseIII"/>
    <property type="match status" value="1"/>
</dbReference>
<dbReference type="PANTHER" id="PTHR11207:SF0">
    <property type="entry name" value="RIBONUCLEASE 3"/>
    <property type="match status" value="1"/>
</dbReference>
<dbReference type="PANTHER" id="PTHR11207">
    <property type="entry name" value="RIBONUCLEASE III"/>
    <property type="match status" value="1"/>
</dbReference>
<dbReference type="Pfam" id="PF00035">
    <property type="entry name" value="dsrm"/>
    <property type="match status" value="1"/>
</dbReference>
<dbReference type="Pfam" id="PF14622">
    <property type="entry name" value="Ribonucleas_3_3"/>
    <property type="match status" value="1"/>
</dbReference>
<dbReference type="SMART" id="SM00358">
    <property type="entry name" value="DSRM"/>
    <property type="match status" value="1"/>
</dbReference>
<dbReference type="SMART" id="SM00535">
    <property type="entry name" value="RIBOc"/>
    <property type="match status" value="1"/>
</dbReference>
<dbReference type="SUPFAM" id="SSF54768">
    <property type="entry name" value="dsRNA-binding domain-like"/>
    <property type="match status" value="1"/>
</dbReference>
<dbReference type="SUPFAM" id="SSF69065">
    <property type="entry name" value="RNase III domain-like"/>
    <property type="match status" value="1"/>
</dbReference>
<dbReference type="PROSITE" id="PS50137">
    <property type="entry name" value="DS_RBD"/>
    <property type="match status" value="1"/>
</dbReference>
<dbReference type="PROSITE" id="PS50142">
    <property type="entry name" value="RNASE_3_2"/>
    <property type="match status" value="1"/>
</dbReference>
<protein>
    <recommendedName>
        <fullName evidence="1">Ribonuclease 3</fullName>
        <ecNumber evidence="1">3.1.26.3</ecNumber>
    </recommendedName>
    <alternativeName>
        <fullName evidence="1">Ribonuclease III</fullName>
        <shortName evidence="1">RNase III</shortName>
    </alternativeName>
</protein>